<accession>Q9XJR5</accession>
<name>P8_BPPM2</name>
<sequence>MLGALMGVAGGAPMGGASPMGGMPSIASSSSAETGQQTQSGNFTGGGINFGSNNNNQLLIVGAVVIGLFLVIKRK</sequence>
<feature type="chain" id="PRO_0000339905" description="Protein P8">
    <location>
        <begin position="1"/>
        <end position="75"/>
    </location>
</feature>
<feature type="transmembrane region" description="Helical" evidence="1">
    <location>
        <begin position="55"/>
        <end position="72"/>
    </location>
</feature>
<feature type="region of interest" description="Disordered" evidence="2">
    <location>
        <begin position="19"/>
        <end position="47"/>
    </location>
</feature>
<feature type="compositionally biased region" description="Polar residues" evidence="2">
    <location>
        <begin position="26"/>
        <end position="39"/>
    </location>
</feature>
<keyword id="KW-1231">Capsid inner membrane protein</keyword>
<keyword id="KW-0903">Direct protein sequencing</keyword>
<keyword id="KW-0472">Membrane</keyword>
<keyword id="KW-1185">Reference proteome</keyword>
<keyword id="KW-0812">Transmembrane</keyword>
<keyword id="KW-1133">Transmembrane helix</keyword>
<keyword id="KW-0946">Virion</keyword>
<protein>
    <recommendedName>
        <fullName>Protein P8</fullName>
    </recommendedName>
    <alternativeName>
        <fullName>Protein VIII</fullName>
    </alternativeName>
</protein>
<comment type="subcellular location">
    <subcellularLocation>
        <location evidence="4">Virion membrane</location>
        <topology evidence="4">Single-pass membrane protein</topology>
    </subcellularLocation>
    <text evidence="3">Part of the capsid inner membrane.</text>
</comment>
<dbReference type="EMBL" id="AF155037">
    <property type="protein sequence ID" value="AAD43552.1"/>
    <property type="molecule type" value="Genomic_DNA"/>
</dbReference>
<dbReference type="RefSeq" id="NP_049906.1">
    <property type="nucleotide sequence ID" value="NC_000867.1"/>
</dbReference>
<dbReference type="SMR" id="Q9XJR5"/>
<dbReference type="KEGG" id="vg:1262024"/>
<dbReference type="Proteomes" id="UP000002136">
    <property type="component" value="Genome"/>
</dbReference>
<dbReference type="GO" id="GO:0016020">
    <property type="term" value="C:membrane"/>
    <property type="evidence" value="ECO:0007669"/>
    <property type="project" value="UniProtKB-KW"/>
</dbReference>
<dbReference type="GO" id="GO:0039641">
    <property type="term" value="C:viral inner membrane"/>
    <property type="evidence" value="ECO:0007669"/>
    <property type="project" value="UniProtKB-KW"/>
</dbReference>
<dbReference type="GO" id="GO:0055036">
    <property type="term" value="C:virion membrane"/>
    <property type="evidence" value="ECO:0000314"/>
    <property type="project" value="CACAO"/>
</dbReference>
<organism>
    <name type="scientific">Pseudoalteromonas phage PM2</name>
    <name type="common">Bacteriophage PM2</name>
    <dbReference type="NCBI Taxonomy" id="2905728"/>
    <lineage>
        <taxon>Viruses</taxon>
        <taxon>Varidnaviria</taxon>
        <taxon>Bamfordvirae</taxon>
        <taxon>Preplasmiviricota</taxon>
        <taxon>Tectiliviricetes</taxon>
        <taxon>Vinavirales</taxon>
        <taxon>Corticoviridae</taxon>
        <taxon>Corticovirus</taxon>
        <taxon>Corticovirus PM2</taxon>
    </lineage>
</organism>
<organismHost>
    <name type="scientific">Pseudoalteromonas espejiana</name>
    <dbReference type="NCBI Taxonomy" id="28107"/>
</organismHost>
<gene>
    <name type="primary">VIII</name>
</gene>
<proteinExistence type="evidence at protein level"/>
<evidence type="ECO:0000255" key="1"/>
<evidence type="ECO:0000256" key="2">
    <source>
        <dbReference type="SAM" id="MobiDB-lite"/>
    </source>
</evidence>
<evidence type="ECO:0000305" key="3"/>
<evidence type="ECO:0000305" key="4">
    <source>
    </source>
</evidence>
<reference key="1">
    <citation type="journal article" date="1999" name="Virology">
        <title>The complete genome sequence of PM2, the first lipid-containing bacterial virus to be isolated.</title>
        <authorList>
            <person name="Maennistoe R.H."/>
            <person name="Kivelae H.M."/>
            <person name="Paulin L."/>
            <person name="Bamford D.H."/>
            <person name="Bamford J.K."/>
        </authorList>
    </citation>
    <scope>NUCLEOTIDE SEQUENCE [GENOMIC DNA]</scope>
</reference>
<reference key="2">
    <citation type="journal article" date="1999" name="Virology">
        <title>Purification and protein composition of PM2, the first lipid-containing bacterial virus to be isolated.</title>
        <authorList>
            <person name="Kivelae H.M."/>
            <person name="Maennistoe R.H."/>
            <person name="Kalkkinen N."/>
            <person name="Bamford D.H."/>
        </authorList>
    </citation>
    <scope>PROTEIN SEQUENCE OF 1-10</scope>
</reference>
<reference key="3">
    <citation type="journal article" date="2002" name="J. Virol.">
        <title>Bacteriophage PM2 has a protein capsid surrounding a spherical proteinaceous lipid core.</title>
        <authorList>
            <person name="Kivelae H.M."/>
            <person name="Kalkkinen N."/>
            <person name="Bamford D.H."/>
        </authorList>
    </citation>
    <scope>PROTEIN SEQUENCE OF 1-7</scope>
    <scope>SUBCELLULAR LOCATION</scope>
</reference>